<reference key="1">
    <citation type="submission" date="2009-01" db="EMBL/GenBank/DDBJ databases">
        <title>Branchiostoma mitochondrial DNA, complete genome.</title>
        <authorList>
            <person name="Takada Y."/>
            <person name="Imai T."/>
        </authorList>
    </citation>
    <scope>NUCLEOTIDE SEQUENCE [GENOMIC DNA]</scope>
    <scope>VARIANTS SER-6; ILE-52; VAL-160 AND VAL-210</scope>
    <source>
        <strain>Bf-H01</strain>
        <strain>Bf-H02</strain>
        <strain>Bf-H03</strain>
        <strain>Bf-H04</strain>
        <strain>Bf-H05</strain>
        <strain>Bf-H06</strain>
        <strain>Bf-H07</strain>
        <strain>Bf-H08</strain>
        <strain>Bf-H09</strain>
        <strain>Bf-H10</strain>
        <strain>Bf-M01</strain>
        <strain>Bf-M02</strain>
        <strain>Bf-M03</strain>
        <strain>Bf-M04</strain>
        <strain>Bf-M05</strain>
        <strain>Bf-M06</strain>
        <strain>Bf-M07</strain>
        <strain>Bf-M08</strain>
        <strain>Bf-M09</strain>
        <strain>Bf-M10</strain>
    </source>
</reference>
<reference key="2">
    <citation type="journal article" date="1999" name="Mol. Biol. Evol.">
        <title>Complete sequence, gene arrangement, and genetic code of mitochondrial DNA of the cephalochordate Branchiostoma floridae (Amphioxus).</title>
        <authorList>
            <person name="Boore J.L."/>
            <person name="Daehler L.L."/>
            <person name="Brown W.M."/>
        </authorList>
    </citation>
    <scope>NUCLEOTIDE SEQUENCE [LARGE SCALE GENOMIC DNA]</scope>
    <source>
        <strain evidence="5">S238N-H82</strain>
    </source>
</reference>
<name>COX3_BRAFL</name>
<feature type="chain" id="PRO_0000183747" description="Cytochrome c oxidase subunit 3">
    <location>
        <begin position="1"/>
        <end position="262"/>
    </location>
</feature>
<feature type="transmembrane region" description="Helical" evidence="2">
    <location>
        <begin position="11"/>
        <end position="31"/>
    </location>
</feature>
<feature type="transmembrane region" description="Helical" evidence="2">
    <location>
        <begin position="32"/>
        <end position="52"/>
    </location>
</feature>
<feature type="transmembrane region" description="Helical" evidence="2">
    <location>
        <begin position="83"/>
        <end position="103"/>
    </location>
</feature>
<feature type="transmembrane region" description="Helical" evidence="2">
    <location>
        <begin position="125"/>
        <end position="147"/>
    </location>
</feature>
<feature type="transmembrane region" description="Helical" evidence="2">
    <location>
        <begin position="160"/>
        <end position="180"/>
    </location>
</feature>
<feature type="transmembrane region" description="Helical" evidence="2">
    <location>
        <begin position="198"/>
        <end position="218"/>
    </location>
</feature>
<feature type="transmembrane region" description="Helical" evidence="2">
    <location>
        <begin position="240"/>
        <end position="260"/>
    </location>
</feature>
<feature type="sequence variant" description="In strain: Bf-H09." evidence="3">
    <original>P</original>
    <variation>S</variation>
    <location>
        <position position="6"/>
    </location>
</feature>
<feature type="sequence variant" description="In strain: Bf-M01 and Bf-H10." evidence="3">
    <original>V</original>
    <variation>I</variation>
    <location>
        <position position="52"/>
    </location>
</feature>
<feature type="sequence variant" description="In strain: Bf-H07." evidence="3">
    <original>A</original>
    <variation>V</variation>
    <location>
        <position position="160"/>
    </location>
</feature>
<feature type="sequence variant" description="In strain: Bf-H03 and Bf-H04." evidence="3">
    <original>I</original>
    <variation>V</variation>
    <location>
        <position position="210"/>
    </location>
</feature>
<evidence type="ECO:0000250" key="1">
    <source>
        <dbReference type="UniProtKB" id="P00420"/>
    </source>
</evidence>
<evidence type="ECO:0000255" key="2"/>
<evidence type="ECO:0000269" key="3">
    <source ref="1"/>
</evidence>
<evidence type="ECO:0000305" key="4"/>
<evidence type="ECO:0000312" key="5">
    <source>
        <dbReference type="Proteomes" id="UP000001554"/>
    </source>
</evidence>
<sequence>MTGYQPHPWHLVEPSPWPLVGGSAAFTLTVGLVMWFHYNSISLMILGLVMIVATMIQWWRDVIREATFQGCHTSYVLSGLRRGMVLFIVSEVFFFLAFFWAFFHSSLAPTVELGVTWPPVGVHPLNAFAVPLLNTAVLLSSGVTVTWAHHALMEGKRTEAIQSLAITVMLGLYFTGLQAWEYYEAPFTIADSVYGSTFFVATGFHGLHVIIGSTFLMVCLGRQVFYHYTSSHHFGFEAAAWYWHFVDVVWLFLYVCIYWWGS</sequence>
<proteinExistence type="inferred from homology"/>
<protein>
    <recommendedName>
        <fullName>Cytochrome c oxidase subunit 3</fullName>
        <ecNumber>7.1.1.9</ecNumber>
    </recommendedName>
    <alternativeName>
        <fullName>Cytochrome c oxidase polypeptide III</fullName>
    </alternativeName>
</protein>
<organism>
    <name type="scientific">Branchiostoma floridae</name>
    <name type="common">Florida lancelet</name>
    <name type="synonym">Amphioxus</name>
    <dbReference type="NCBI Taxonomy" id="7739"/>
    <lineage>
        <taxon>Eukaryota</taxon>
        <taxon>Metazoa</taxon>
        <taxon>Chordata</taxon>
        <taxon>Cephalochordata</taxon>
        <taxon>Leptocardii</taxon>
        <taxon>Amphioxiformes</taxon>
        <taxon>Branchiostomatidae</taxon>
        <taxon>Branchiostoma</taxon>
    </lineage>
</organism>
<keyword id="KW-0472">Membrane</keyword>
<keyword id="KW-0496">Mitochondrion</keyword>
<keyword id="KW-0999">Mitochondrion inner membrane</keyword>
<keyword id="KW-1185">Reference proteome</keyword>
<keyword id="KW-1278">Translocase</keyword>
<keyword id="KW-0812">Transmembrane</keyword>
<keyword id="KW-1133">Transmembrane helix</keyword>
<dbReference type="EC" id="7.1.1.9"/>
<dbReference type="EMBL" id="AB478574">
    <property type="protein sequence ID" value="BAH86333.1"/>
    <property type="molecule type" value="Genomic_DNA"/>
</dbReference>
<dbReference type="EMBL" id="AB478575">
    <property type="protein sequence ID" value="BAH86346.1"/>
    <property type="molecule type" value="Genomic_DNA"/>
</dbReference>
<dbReference type="EMBL" id="AB478576">
    <property type="protein sequence ID" value="BAH86359.1"/>
    <property type="molecule type" value="Genomic_DNA"/>
</dbReference>
<dbReference type="EMBL" id="AB478577">
    <property type="protein sequence ID" value="BAH86372.1"/>
    <property type="molecule type" value="Genomic_DNA"/>
</dbReference>
<dbReference type="EMBL" id="AB478578">
    <property type="protein sequence ID" value="BAH86385.1"/>
    <property type="molecule type" value="Genomic_DNA"/>
</dbReference>
<dbReference type="EMBL" id="AB478579">
    <property type="protein sequence ID" value="BAH86398.1"/>
    <property type="molecule type" value="Genomic_DNA"/>
</dbReference>
<dbReference type="EMBL" id="AB478580">
    <property type="protein sequence ID" value="BAH86411.1"/>
    <property type="molecule type" value="Genomic_DNA"/>
</dbReference>
<dbReference type="EMBL" id="AB478581">
    <property type="protein sequence ID" value="BAH86424.1"/>
    <property type="molecule type" value="Genomic_DNA"/>
</dbReference>
<dbReference type="EMBL" id="AB478582">
    <property type="protein sequence ID" value="BAH86437.1"/>
    <property type="molecule type" value="Genomic_DNA"/>
</dbReference>
<dbReference type="EMBL" id="AB478583">
    <property type="protein sequence ID" value="BAH86450.1"/>
    <property type="molecule type" value="Genomic_DNA"/>
</dbReference>
<dbReference type="EMBL" id="AB478584">
    <property type="protein sequence ID" value="BAH86463.1"/>
    <property type="molecule type" value="Genomic_DNA"/>
</dbReference>
<dbReference type="EMBL" id="AB478585">
    <property type="protein sequence ID" value="BAH86476.1"/>
    <property type="molecule type" value="Genomic_DNA"/>
</dbReference>
<dbReference type="EMBL" id="AB478586">
    <property type="protein sequence ID" value="BAH86489.1"/>
    <property type="molecule type" value="Genomic_DNA"/>
</dbReference>
<dbReference type="EMBL" id="AB478587">
    <property type="protein sequence ID" value="BAH86502.1"/>
    <property type="molecule type" value="Genomic_DNA"/>
</dbReference>
<dbReference type="EMBL" id="AB478588">
    <property type="protein sequence ID" value="BAH86515.1"/>
    <property type="molecule type" value="Genomic_DNA"/>
</dbReference>
<dbReference type="EMBL" id="AB478589">
    <property type="protein sequence ID" value="BAH86528.1"/>
    <property type="molecule type" value="Genomic_DNA"/>
</dbReference>
<dbReference type="EMBL" id="AB478590">
    <property type="protein sequence ID" value="BAH86541.1"/>
    <property type="molecule type" value="Genomic_DNA"/>
</dbReference>
<dbReference type="EMBL" id="AB478591">
    <property type="protein sequence ID" value="BAH86554.1"/>
    <property type="molecule type" value="Genomic_DNA"/>
</dbReference>
<dbReference type="EMBL" id="AB478592">
    <property type="protein sequence ID" value="BAH86567.1"/>
    <property type="molecule type" value="Genomic_DNA"/>
</dbReference>
<dbReference type="EMBL" id="AB478593">
    <property type="protein sequence ID" value="BAH86580.1"/>
    <property type="molecule type" value="Genomic_DNA"/>
</dbReference>
<dbReference type="EMBL" id="AF098298">
    <property type="protein sequence ID" value="AAB87994.1"/>
    <property type="molecule type" value="Genomic_DNA"/>
</dbReference>
<dbReference type="SMR" id="P69216"/>
<dbReference type="FunCoup" id="P69216">
    <property type="interactions" value="13"/>
</dbReference>
<dbReference type="STRING" id="7739.P69216"/>
<dbReference type="KEGG" id="bfo:808730"/>
<dbReference type="CTD" id="4514"/>
<dbReference type="InParanoid" id="P69216"/>
<dbReference type="OMA" id="SIYWWGS"/>
<dbReference type="OrthoDB" id="10050457at2759"/>
<dbReference type="Proteomes" id="UP000001554">
    <property type="component" value="Mitochondrion MT"/>
</dbReference>
<dbReference type="GO" id="GO:0005743">
    <property type="term" value="C:mitochondrial inner membrane"/>
    <property type="evidence" value="ECO:0007669"/>
    <property type="project" value="UniProtKB-SubCell"/>
</dbReference>
<dbReference type="GO" id="GO:0005739">
    <property type="term" value="C:mitochondrion"/>
    <property type="evidence" value="ECO:0000318"/>
    <property type="project" value="GO_Central"/>
</dbReference>
<dbReference type="GO" id="GO:0004129">
    <property type="term" value="F:cytochrome-c oxidase activity"/>
    <property type="evidence" value="ECO:0007669"/>
    <property type="project" value="UniProtKB-EC"/>
</dbReference>
<dbReference type="GO" id="GO:0006123">
    <property type="term" value="P:mitochondrial electron transport, cytochrome c to oxygen"/>
    <property type="evidence" value="ECO:0000318"/>
    <property type="project" value="GO_Central"/>
</dbReference>
<dbReference type="CDD" id="cd01665">
    <property type="entry name" value="Cyt_c_Oxidase_III"/>
    <property type="match status" value="1"/>
</dbReference>
<dbReference type="FunFam" id="1.20.120.80:FF:000002">
    <property type="entry name" value="Cytochrome c oxidase subunit 3"/>
    <property type="match status" value="1"/>
</dbReference>
<dbReference type="Gene3D" id="1.10.287.70">
    <property type="match status" value="1"/>
</dbReference>
<dbReference type="Gene3D" id="1.20.120.80">
    <property type="entry name" value="Cytochrome c oxidase, subunit III, four-helix bundle"/>
    <property type="match status" value="1"/>
</dbReference>
<dbReference type="InterPro" id="IPR024791">
    <property type="entry name" value="Cyt_c/ubiquinol_Oxase_su3"/>
</dbReference>
<dbReference type="InterPro" id="IPR033945">
    <property type="entry name" value="Cyt_c_oxase_su3_dom"/>
</dbReference>
<dbReference type="InterPro" id="IPR000298">
    <property type="entry name" value="Cyt_c_oxidase-like_su3"/>
</dbReference>
<dbReference type="InterPro" id="IPR035973">
    <property type="entry name" value="Cyt_c_oxidase_su3-like_sf"/>
</dbReference>
<dbReference type="InterPro" id="IPR013833">
    <property type="entry name" value="Cyt_c_oxidase_su3_a-hlx"/>
</dbReference>
<dbReference type="PANTHER" id="PTHR11403:SF7">
    <property type="entry name" value="CYTOCHROME C OXIDASE SUBUNIT 3"/>
    <property type="match status" value="1"/>
</dbReference>
<dbReference type="PANTHER" id="PTHR11403">
    <property type="entry name" value="CYTOCHROME C OXIDASE SUBUNIT III"/>
    <property type="match status" value="1"/>
</dbReference>
<dbReference type="Pfam" id="PF00510">
    <property type="entry name" value="COX3"/>
    <property type="match status" value="1"/>
</dbReference>
<dbReference type="SUPFAM" id="SSF81452">
    <property type="entry name" value="Cytochrome c oxidase subunit III-like"/>
    <property type="match status" value="1"/>
</dbReference>
<dbReference type="PROSITE" id="PS50253">
    <property type="entry name" value="COX3"/>
    <property type="match status" value="1"/>
</dbReference>
<gene>
    <name type="primary">COIII</name>
</gene>
<geneLocation type="mitochondrion"/>
<accession>P69216</accession>
<accession>C6L3C4</accession>
<accession>C6L3D7</accession>
<accession>C6L3L5</accession>
<accession>C6L3Q4</accession>
<accession>C6L3Z5</accession>
<accession>C6L408</accession>
<accession>O47425</accession>
<comment type="function">
    <text evidence="1">Component of the cytochrome c oxidase, the last enzyme in the mitochondrial electron transport chain which drives oxidative phosphorylation. The respiratory chain contains 3 multisubunit complexes succinate dehydrogenase (complex II, CII), ubiquinol-cytochrome c oxidoreductase (cytochrome b-c1 complex, complex III, CIII) and cytochrome c oxidase (complex IV, CIV), that cooperate to transfer electrons derived from NADH and succinate to molecular oxygen, creating an electrochemical gradient over the inner membrane that drives transmembrane transport and the ATP synthase. Cytochrome c oxidase is the component of the respiratory chain that catalyzes the reduction of oxygen to water. Electrons originating from reduced cytochrome c in the intermembrane space (IMS) are transferred via the dinuclear copper A center (CU(A)) of subunit 2 and heme A of subunit 1 to the active site in subunit 1, a binuclear center (BNC) formed by heme A3 and copper B (CU(B)). The BNC reduces molecular oxygen to 2 water molecules using 4 electrons from cytochrome c in the IMS and 4 protons from the mitochondrial matrix.</text>
</comment>
<comment type="catalytic activity">
    <reaction evidence="1">
        <text>4 Fe(II)-[cytochrome c] + O2 + 8 H(+)(in) = 4 Fe(III)-[cytochrome c] + 2 H2O + 4 H(+)(out)</text>
        <dbReference type="Rhea" id="RHEA:11436"/>
        <dbReference type="Rhea" id="RHEA-COMP:10350"/>
        <dbReference type="Rhea" id="RHEA-COMP:14399"/>
        <dbReference type="ChEBI" id="CHEBI:15377"/>
        <dbReference type="ChEBI" id="CHEBI:15378"/>
        <dbReference type="ChEBI" id="CHEBI:15379"/>
        <dbReference type="ChEBI" id="CHEBI:29033"/>
        <dbReference type="ChEBI" id="CHEBI:29034"/>
        <dbReference type="EC" id="7.1.1.9"/>
    </reaction>
    <physiologicalReaction direction="left-to-right" evidence="1">
        <dbReference type="Rhea" id="RHEA:11437"/>
    </physiologicalReaction>
</comment>
<comment type="subunit">
    <text evidence="1">Component of the cytochrome c oxidase (complex IV, CIV), a multisubunit enzyme composed of a catalytic core of 3 subunits and several supernumerary subunits. The complex exists as a monomer or a dimer and forms supercomplexes (SCs) in the inner mitochondrial membrane with ubiquinol-cytochrome c oxidoreductase (cytochrome b-c1 complex, complex III, CIII).</text>
</comment>
<comment type="subcellular location">
    <subcellularLocation>
        <location evidence="1">Mitochondrion inner membrane</location>
        <topology evidence="1">Multi-pass membrane protein</topology>
    </subcellularLocation>
</comment>
<comment type="similarity">
    <text evidence="4">Belongs to the cytochrome c oxidase subunit 3 family.</text>
</comment>